<name>TXL1A_SCOMO</name>
<keyword id="KW-0964">Secreted</keyword>
<keyword id="KW-0732">Signal</keyword>
<keyword id="KW-0800">Toxin</keyword>
<reference key="1">
    <citation type="journal article" date="2014" name="Mol. Biol. Evol.">
        <title>Clawing through evolution: toxin diversification and convergence in the ancient lineage Chilopoda (centipedes).</title>
        <authorList>
            <person name="Undheim E.A."/>
            <person name="Jones A."/>
            <person name="Clauser K.R."/>
            <person name="Holland J.W."/>
            <person name="Pineda S.S."/>
            <person name="King G.F."/>
            <person name="Fry B.G."/>
        </authorList>
    </citation>
    <scope>NUCLEOTIDE SEQUENCE [MRNA]</scope>
    <scope>NOMENCLATURE</scope>
    <source>
        <tissue>Venom gland</tissue>
    </source>
</reference>
<accession>P0DQF2</accession>
<proteinExistence type="inferred from homology"/>
<organism>
    <name type="scientific">Scolopendra morsitans</name>
    <name type="common">Tanzanian blue ringleg centipede</name>
    <dbReference type="NCBI Taxonomy" id="943129"/>
    <lineage>
        <taxon>Eukaryota</taxon>
        <taxon>Metazoa</taxon>
        <taxon>Ecdysozoa</taxon>
        <taxon>Arthropoda</taxon>
        <taxon>Myriapoda</taxon>
        <taxon>Chilopoda</taxon>
        <taxon>Pleurostigmophora</taxon>
        <taxon>Scolopendromorpha</taxon>
        <taxon>Scolopendridae</taxon>
        <taxon>Scolopendra</taxon>
    </lineage>
</organism>
<comment type="subcellular location">
    <subcellularLocation>
        <location evidence="5">Secreted</location>
    </subcellularLocation>
</comment>
<comment type="tissue specificity">
    <text evidence="5">Expressed by the venom gland.</text>
</comment>
<comment type="similarity">
    <text evidence="4">Belongs to the scoloptoxin-21 family.</text>
</comment>
<comment type="online information" name="National Center for Biotechnology Information (NCBI)">
    <link uri="https://www.ncbi.nlm.nih.gov/nuccore/GASH01000171"/>
</comment>
<evidence type="ECO:0000255" key="1"/>
<evidence type="ECO:0000256" key="2">
    <source>
        <dbReference type="SAM" id="MobiDB-lite"/>
    </source>
</evidence>
<evidence type="ECO:0000303" key="3">
    <source>
    </source>
</evidence>
<evidence type="ECO:0000305" key="4"/>
<evidence type="ECO:0000305" key="5">
    <source>
    </source>
</evidence>
<sequence>MKSVIFALFLVYLLIVRAAEANENIGLGLDRGSSGTIAAKQQMGIELANDPNGPGRRRRAPAENEDFLKHS</sequence>
<protein>
    <recommendedName>
        <fullName evidence="3">U-scoloptoxin(21)-Sm1a</fullName>
        <shortName evidence="3">U-SLPTX(21)-Sm1a</shortName>
    </recommendedName>
</protein>
<feature type="signal peptide" evidence="1">
    <location>
        <begin position="1"/>
        <end position="21"/>
    </location>
</feature>
<feature type="chain" id="PRO_0000446829" description="U-scoloptoxin(21)-Sm1a" evidence="4">
    <location>
        <begin position="22"/>
        <end position="71"/>
    </location>
</feature>
<feature type="region of interest" description="Disordered" evidence="2">
    <location>
        <begin position="45"/>
        <end position="71"/>
    </location>
</feature>
<feature type="compositionally biased region" description="Basic and acidic residues" evidence="2">
    <location>
        <begin position="60"/>
        <end position="71"/>
    </location>
</feature>
<dbReference type="GO" id="GO:0005615">
    <property type="term" value="C:extracellular space"/>
    <property type="evidence" value="ECO:0007669"/>
    <property type="project" value="TreeGrafter"/>
</dbReference>
<dbReference type="GO" id="GO:0008613">
    <property type="term" value="F:diuretic hormone activity"/>
    <property type="evidence" value="ECO:0007669"/>
    <property type="project" value="InterPro"/>
</dbReference>
<dbReference type="GO" id="GO:0001664">
    <property type="term" value="F:G protein-coupled receptor binding"/>
    <property type="evidence" value="ECO:0007669"/>
    <property type="project" value="TreeGrafter"/>
</dbReference>
<dbReference type="GO" id="GO:0090729">
    <property type="term" value="F:toxin activity"/>
    <property type="evidence" value="ECO:0007669"/>
    <property type="project" value="UniProtKB-KW"/>
</dbReference>
<dbReference type="GO" id="GO:0007589">
    <property type="term" value="P:body fluid secretion"/>
    <property type="evidence" value="ECO:0007669"/>
    <property type="project" value="InterPro"/>
</dbReference>
<dbReference type="InterPro" id="IPR034439">
    <property type="entry name" value="DH2-like"/>
</dbReference>
<dbReference type="PANTHER" id="PTHR41146">
    <property type="entry name" value="DIURETIC HORMONE CLASS 2"/>
    <property type="match status" value="1"/>
</dbReference>
<dbReference type="PANTHER" id="PTHR41146:SF1">
    <property type="entry name" value="DIURETIC HORMONE CLASS 2"/>
    <property type="match status" value="1"/>
</dbReference>